<comment type="function">
    <text evidence="5">Involved in the biosynthesis of the cyanogenic glucosides linamarin and lotaustralin and of the nitirle glucosides rhodiocyanoside A and D (PubMed:15122013). Can use L-isoleucine &gt; L-valine as substrate, but not L-leucine, L-phenylalanine or L-tyrosine (PubMed:15122013). Catalyzes multi-step reactions starting with two successive N-hydroxylations using L-isoleucine and, to a lower extent, L-valine as substrates leading to the formation of N,N-dihydroxy-L-valine and N,N-dihydroxy-L-isoleucine, respectively; following spontaneous reactions lead to the production of (E)-2-methylpropanal oxime and (1E,2S)-2-methylbutanal oxime, respectively (PubMed:15122013).</text>
</comment>
<comment type="catalytic activity">
    <reaction evidence="5">
        <text>L-isoleucine + 2 reduced [NADPH--hemoprotein reductase] + 2 O2 = (1E,2S)-2-methylbutanal oxime + 2 oxidized [NADPH--hemoprotein reductase] + CO2 + 3 H2O + 2 H(+)</text>
        <dbReference type="Rhea" id="RHEA:28602"/>
        <dbReference type="Rhea" id="RHEA-COMP:11964"/>
        <dbReference type="Rhea" id="RHEA-COMP:11965"/>
        <dbReference type="ChEBI" id="CHEBI:15377"/>
        <dbReference type="ChEBI" id="CHEBI:15378"/>
        <dbReference type="ChEBI" id="CHEBI:15379"/>
        <dbReference type="ChEBI" id="CHEBI:16526"/>
        <dbReference type="ChEBI" id="CHEBI:57618"/>
        <dbReference type="ChEBI" id="CHEBI:58045"/>
        <dbReference type="ChEBI" id="CHEBI:58210"/>
        <dbReference type="ChEBI" id="CHEBI:134628"/>
        <dbReference type="EC" id="1.14.14.39"/>
    </reaction>
</comment>
<comment type="catalytic activity">
    <reaction evidence="8">
        <text>L-isoleucine + reduced [NADPH--hemoprotein reductase] + O2 = N-hydroxy-L-isoleucine + oxidized [NADPH--hemoprotein reductase] + H2O + 2 H(+)</text>
        <dbReference type="Rhea" id="RHEA:30479"/>
        <dbReference type="Rhea" id="RHEA-COMP:11964"/>
        <dbReference type="Rhea" id="RHEA-COMP:11965"/>
        <dbReference type="ChEBI" id="CHEBI:15377"/>
        <dbReference type="ChEBI" id="CHEBI:15378"/>
        <dbReference type="ChEBI" id="CHEBI:15379"/>
        <dbReference type="ChEBI" id="CHEBI:57618"/>
        <dbReference type="ChEBI" id="CHEBI:58045"/>
        <dbReference type="ChEBI" id="CHEBI:58210"/>
        <dbReference type="ChEBI" id="CHEBI:61131"/>
    </reaction>
</comment>
<comment type="catalytic activity">
    <reaction evidence="8">
        <text>N-hydroxy-L-isoleucine + reduced [NADPH--hemoprotein reductase] + O2 = N,N-dihydroxy-L-isoleucine + oxidized [NADPH--hemoprotein reductase] + H2O + H(+)</text>
        <dbReference type="Rhea" id="RHEA:30483"/>
        <dbReference type="Rhea" id="RHEA-COMP:11964"/>
        <dbReference type="Rhea" id="RHEA-COMP:11965"/>
        <dbReference type="ChEBI" id="CHEBI:15377"/>
        <dbReference type="ChEBI" id="CHEBI:15378"/>
        <dbReference type="ChEBI" id="CHEBI:15379"/>
        <dbReference type="ChEBI" id="CHEBI:57618"/>
        <dbReference type="ChEBI" id="CHEBI:58210"/>
        <dbReference type="ChEBI" id="CHEBI:61131"/>
        <dbReference type="ChEBI" id="CHEBI:61133"/>
    </reaction>
</comment>
<comment type="catalytic activity">
    <reaction evidence="5">
        <text>L-valine + 2 reduced [NADPH--hemoprotein reductase] + 2 O2 = (E)-2-methylpropanal oxime + 2 oxidized [NADPH--hemoprotein reductase] + CO2 + 3 H2O + 2 H(+)</text>
        <dbReference type="Rhea" id="RHEA:28606"/>
        <dbReference type="Rhea" id="RHEA-COMP:11964"/>
        <dbReference type="Rhea" id="RHEA-COMP:11965"/>
        <dbReference type="ChEBI" id="CHEBI:15377"/>
        <dbReference type="ChEBI" id="CHEBI:15378"/>
        <dbReference type="ChEBI" id="CHEBI:15379"/>
        <dbReference type="ChEBI" id="CHEBI:16526"/>
        <dbReference type="ChEBI" id="CHEBI:57618"/>
        <dbReference type="ChEBI" id="CHEBI:57762"/>
        <dbReference type="ChEBI" id="CHEBI:58210"/>
        <dbReference type="ChEBI" id="CHEBI:61143"/>
        <dbReference type="EC" id="1.14.14.38"/>
    </reaction>
</comment>
<comment type="catalytic activity">
    <reaction evidence="8">
        <text>L-valine + reduced [NADPH--hemoprotein reductase] + O2 = N-hydroxy-L-valine + oxidized [NADPH--hemoprotein reductase] + H2O + 2 H(+)</text>
        <dbReference type="Rhea" id="RHEA:30491"/>
        <dbReference type="Rhea" id="RHEA-COMP:11964"/>
        <dbReference type="Rhea" id="RHEA-COMP:11965"/>
        <dbReference type="ChEBI" id="CHEBI:15377"/>
        <dbReference type="ChEBI" id="CHEBI:15378"/>
        <dbReference type="ChEBI" id="CHEBI:15379"/>
        <dbReference type="ChEBI" id="CHEBI:57618"/>
        <dbReference type="ChEBI" id="CHEBI:57762"/>
        <dbReference type="ChEBI" id="CHEBI:58210"/>
        <dbReference type="ChEBI" id="CHEBI:61140"/>
    </reaction>
</comment>
<comment type="catalytic activity">
    <reaction evidence="8">
        <text>N-hydroxy-L-valine + reduced [NADPH--hemoprotein reductase] + O2 = N,N-dihydroxy-L-valine + oxidized [NADPH--hemoprotein reductase] + H2O + H(+)</text>
        <dbReference type="Rhea" id="RHEA:30495"/>
        <dbReference type="Rhea" id="RHEA-COMP:11964"/>
        <dbReference type="Rhea" id="RHEA-COMP:11965"/>
        <dbReference type="ChEBI" id="CHEBI:15377"/>
        <dbReference type="ChEBI" id="CHEBI:15378"/>
        <dbReference type="ChEBI" id="CHEBI:15379"/>
        <dbReference type="ChEBI" id="CHEBI:57618"/>
        <dbReference type="ChEBI" id="CHEBI:58210"/>
        <dbReference type="ChEBI" id="CHEBI:61140"/>
        <dbReference type="ChEBI" id="CHEBI:61142"/>
    </reaction>
</comment>
<comment type="cofactor">
    <cofactor evidence="2">
        <name>heme</name>
        <dbReference type="ChEBI" id="CHEBI:30413"/>
    </cofactor>
</comment>
<comment type="biophysicochemical properties">
    <kinetics>
        <KM evidence="5">1.8 mM for isoleucine</KM>
        <KM evidence="5">2.6 mM for valine</KM>
        <text evidence="5">kcat is 220 min(-1) with isoleucine as substrate (PubMed:15122013). kcat is 50 min(-1) with valine as substrate (PubMed:15122013).</text>
    </kinetics>
</comment>
<comment type="pathway">
    <text evidence="5">Secondary metabolite biosynthesis.</text>
</comment>
<comment type="subcellular location">
    <subcellularLocation>
        <location evidence="1">Microsome membrane</location>
        <topology evidence="3">Single-pass type II membrane protein</topology>
    </subcellularLocation>
</comment>
<comment type="tissue specificity">
    <text evidence="5">Exclusively expressed in aerial parts. Highest expression in the apical leaves. Also detected in the second leaf from the top and in the stem. Not expressed in older leaves or roots.</text>
</comment>
<comment type="miscellaneous">
    <text evidence="8">Unlike in cassava, neither cyanogenic glucosides nor nitrile glucosides seem to be transported over long distances within the plant.</text>
</comment>
<comment type="similarity">
    <text evidence="7">Belongs to the cytochrome P450 family.</text>
</comment>
<reference key="1">
    <citation type="journal article" date="2004" name="Plant Physiol.">
        <title>Biosynthesis of the nitrile glucosides rhodiocyanoside A and D and the cyanogenic glucosides lotaustralin and linamarin in Lotus japonicus.</title>
        <authorList>
            <person name="Forslund K."/>
            <person name="Morant M."/>
            <person name="Jorgensen B."/>
            <person name="Olsen C.E."/>
            <person name="Asamizu E."/>
            <person name="Sato S."/>
            <person name="Tabata S."/>
            <person name="Bak S."/>
        </authorList>
    </citation>
    <scope>NUCLEOTIDE SEQUENCE [GENOMIC DNA]</scope>
    <scope>FUNCTION</scope>
    <scope>CATALYTIC ACTIVITY</scope>
    <scope>TISSUE SPECIFICITY</scope>
    <scope>SUBCELLULAR LOCATION</scope>
    <scope>BIOPHYSICOCHEMICAL PROPERTIES</scope>
    <scope>PATHWAY</scope>
</reference>
<sequence length="535" mass="61261">MGLMPDFLSLCHEFPWTFLLVVIFSFMIFKVTKTHLVNKSKKYKLPPGPKPWPIVGNLPEMLANRPATIWIHKLMKEMNTEIACIRLANTIVIPVTCPTIACEFLKKHDASFASRPKIMSTDIASDGFITTVLVPYGEQWKKMKRVLVNNLLSPQKHQWLLGKRNEEADNLMFYIYNKCCKDVNDGPGLVNIRIAAQHYGGNVFRKLIFNSRYFGKVMEDGGPGFEEVEHINATFTILKYVYAFSISDFVPFLRRLDLDGHRSKIMKAMRIMRKYHDPIIDDRIKQWNDGLKTVEEDLLDVLIKLKDANNKPLLTLKELKAQIIELAIEMVDNPSNAFEWALAEMINQPELLKRATEELDNVVGKERLVQESDIPKLQFVKACAREALRLHPMEYFNVPHLCMNDTMVGDYLFPKGTQVLLSRVALGRNPKFWTDPLKFNPERHLKEGIDVVLTEPDLRFISFTTGRRSCPGVALGTTMTVMLFARMLHGFSWSPPPDVSSIDLVPSKDDLFLAKPLLLVAKPRLAAELYRTNEI</sequence>
<feature type="chain" id="PRO_0000407324" description="Isoleucine N-monooxygenase 1">
    <location>
        <begin position="1"/>
        <end position="535"/>
    </location>
</feature>
<feature type="topological domain" description="Cytoplasmic" evidence="7">
    <location>
        <begin position="1"/>
        <end position="8"/>
    </location>
</feature>
<feature type="transmembrane region" description="Helical; Signal-anchor for type II membrane protein" evidence="3">
    <location>
        <begin position="9"/>
        <end position="29"/>
    </location>
</feature>
<feature type="topological domain" description="Lumenal" evidence="7">
    <location>
        <begin position="30"/>
        <end position="535"/>
    </location>
</feature>
<feature type="binding site" description="axial binding residue" evidence="2">
    <location>
        <position position="470"/>
    </location>
    <ligand>
        <name>heme</name>
        <dbReference type="ChEBI" id="CHEBI:30413"/>
    </ligand>
    <ligandPart>
        <name>Fe</name>
        <dbReference type="ChEBI" id="CHEBI:18248"/>
    </ligandPart>
</feature>
<feature type="glycosylation site" description="N-linked (GlcNAc...) asparagine" evidence="4">
    <location>
        <position position="38"/>
    </location>
</feature>
<feature type="glycosylation site" description="N-linked (GlcNAc...) asparagine" evidence="4">
    <location>
        <position position="232"/>
    </location>
</feature>
<feature type="glycosylation site" description="N-linked (GlcNAc...) asparagine" evidence="4">
    <location>
        <position position="404"/>
    </location>
</feature>
<name>C79D3_LOTJA</name>
<organism>
    <name type="scientific">Lotus japonicus</name>
    <name type="common">Lotus corniculatus var. japonicus</name>
    <dbReference type="NCBI Taxonomy" id="34305"/>
    <lineage>
        <taxon>Eukaryota</taxon>
        <taxon>Viridiplantae</taxon>
        <taxon>Streptophyta</taxon>
        <taxon>Embryophyta</taxon>
        <taxon>Tracheophyta</taxon>
        <taxon>Spermatophyta</taxon>
        <taxon>Magnoliopsida</taxon>
        <taxon>eudicotyledons</taxon>
        <taxon>Gunneridae</taxon>
        <taxon>Pentapetalae</taxon>
        <taxon>rosids</taxon>
        <taxon>fabids</taxon>
        <taxon>Fabales</taxon>
        <taxon>Fabaceae</taxon>
        <taxon>Papilionoideae</taxon>
        <taxon>50 kb inversion clade</taxon>
        <taxon>NPAAA clade</taxon>
        <taxon>Hologalegina</taxon>
        <taxon>robinioid clade</taxon>
        <taxon>Loteae</taxon>
        <taxon>Lotus</taxon>
    </lineage>
</organism>
<protein>
    <recommendedName>
        <fullName evidence="6">Isoleucine N-monooxygenase 1</fullName>
        <ecNumber evidence="5">1.14.14.39</ecNumber>
    </recommendedName>
    <alternativeName>
        <fullName evidence="6">Cytochrome P450 79D3</fullName>
    </alternativeName>
    <alternativeName>
        <fullName evidence="6">Valine N-monooxygenase 1</fullName>
        <ecNumber evidence="5">1.14.14.38</ecNumber>
    </alternativeName>
</protein>
<evidence type="ECO:0000250" key="1">
    <source>
        <dbReference type="UniProtKB" id="D5JBW8"/>
    </source>
</evidence>
<evidence type="ECO:0000250" key="2">
    <source>
        <dbReference type="UniProtKB" id="Q96242"/>
    </source>
</evidence>
<evidence type="ECO:0000255" key="3"/>
<evidence type="ECO:0000255" key="4">
    <source>
        <dbReference type="PROSITE-ProRule" id="PRU00498"/>
    </source>
</evidence>
<evidence type="ECO:0000269" key="5">
    <source>
    </source>
</evidence>
<evidence type="ECO:0000303" key="6">
    <source>
    </source>
</evidence>
<evidence type="ECO:0000305" key="7"/>
<evidence type="ECO:0000305" key="8">
    <source>
    </source>
</evidence>
<gene>
    <name evidence="6" type="primary">CYP79D3</name>
</gene>
<dbReference type="EC" id="1.14.14.39" evidence="5"/>
<dbReference type="EC" id="1.14.14.38" evidence="5"/>
<dbReference type="EMBL" id="AY599895">
    <property type="protein sequence ID" value="AAT11920.1"/>
    <property type="molecule type" value="Genomic_DNA"/>
</dbReference>
<dbReference type="SMR" id="Q6J541"/>
<dbReference type="KEGG" id="ag:AAT11920"/>
<dbReference type="BRENDA" id="1.14.14.38">
    <property type="organism ID" value="3076"/>
</dbReference>
<dbReference type="BRENDA" id="1.14.14.39">
    <property type="organism ID" value="3076"/>
</dbReference>
<dbReference type="SABIO-RK" id="Q6J541"/>
<dbReference type="GO" id="GO:0005783">
    <property type="term" value="C:endoplasmic reticulum"/>
    <property type="evidence" value="ECO:0007669"/>
    <property type="project" value="UniProtKB-KW"/>
</dbReference>
<dbReference type="GO" id="GO:0016020">
    <property type="term" value="C:membrane"/>
    <property type="evidence" value="ECO:0007669"/>
    <property type="project" value="UniProtKB-KW"/>
</dbReference>
<dbReference type="GO" id="GO:0020037">
    <property type="term" value="F:heme binding"/>
    <property type="evidence" value="ECO:0007669"/>
    <property type="project" value="InterPro"/>
</dbReference>
<dbReference type="GO" id="GO:0005506">
    <property type="term" value="F:iron ion binding"/>
    <property type="evidence" value="ECO:0007669"/>
    <property type="project" value="InterPro"/>
</dbReference>
<dbReference type="GO" id="GO:0102001">
    <property type="term" value="F:isoleucine N-monooxygenase (oxime forming) activity"/>
    <property type="evidence" value="ECO:0007669"/>
    <property type="project" value="UniProtKB-EC"/>
</dbReference>
<dbReference type="GO" id="GO:0004497">
    <property type="term" value="F:monooxygenase activity"/>
    <property type="evidence" value="ECO:0000314"/>
    <property type="project" value="UniProtKB"/>
</dbReference>
<dbReference type="GO" id="GO:0102002">
    <property type="term" value="F:valine N-monooxygenase (oxime forming) activity"/>
    <property type="evidence" value="ECO:0007669"/>
    <property type="project" value="RHEA"/>
</dbReference>
<dbReference type="GO" id="GO:0019756">
    <property type="term" value="P:cyanogenic glycoside biosynthetic process"/>
    <property type="evidence" value="ECO:0000314"/>
    <property type="project" value="UniProtKB"/>
</dbReference>
<dbReference type="CDD" id="cd20658">
    <property type="entry name" value="CYP79"/>
    <property type="match status" value="1"/>
</dbReference>
<dbReference type="FunFam" id="1.10.630.10:FF:000037">
    <property type="entry name" value="Cytochrome P450 9"/>
    <property type="match status" value="1"/>
</dbReference>
<dbReference type="Gene3D" id="1.10.630.10">
    <property type="entry name" value="Cytochrome P450"/>
    <property type="match status" value="1"/>
</dbReference>
<dbReference type="InterPro" id="IPR001128">
    <property type="entry name" value="Cyt_P450"/>
</dbReference>
<dbReference type="InterPro" id="IPR002401">
    <property type="entry name" value="Cyt_P450_E_grp-I"/>
</dbReference>
<dbReference type="InterPro" id="IPR036396">
    <property type="entry name" value="Cyt_P450_sf"/>
</dbReference>
<dbReference type="PANTHER" id="PTHR47944">
    <property type="entry name" value="CYTOCHROME P450 98A9"/>
    <property type="match status" value="1"/>
</dbReference>
<dbReference type="PANTHER" id="PTHR47944:SF4">
    <property type="entry name" value="OS09G0441700 PROTEIN"/>
    <property type="match status" value="1"/>
</dbReference>
<dbReference type="Pfam" id="PF00067">
    <property type="entry name" value="p450"/>
    <property type="match status" value="1"/>
</dbReference>
<dbReference type="PRINTS" id="PR00463">
    <property type="entry name" value="EP450I"/>
</dbReference>
<dbReference type="SUPFAM" id="SSF48264">
    <property type="entry name" value="Cytochrome P450"/>
    <property type="match status" value="1"/>
</dbReference>
<keyword id="KW-0256">Endoplasmic reticulum</keyword>
<keyword id="KW-0325">Glycoprotein</keyword>
<keyword id="KW-0349">Heme</keyword>
<keyword id="KW-0408">Iron</keyword>
<keyword id="KW-0472">Membrane</keyword>
<keyword id="KW-0479">Metal-binding</keyword>
<keyword id="KW-0492">Microsome</keyword>
<keyword id="KW-0503">Monooxygenase</keyword>
<keyword id="KW-0560">Oxidoreductase</keyword>
<keyword id="KW-0735">Signal-anchor</keyword>
<keyword id="KW-0812">Transmembrane</keyword>
<keyword id="KW-1133">Transmembrane helix</keyword>
<accession>Q6J541</accession>
<proteinExistence type="evidence at protein level"/>